<feature type="chain" id="PRO_0000126035" description="Small heat shock protein IbpB">
    <location>
        <begin position="1"/>
        <end position="142"/>
    </location>
</feature>
<feature type="domain" description="sHSP" evidence="2">
    <location>
        <begin position="26"/>
        <end position="137"/>
    </location>
</feature>
<evidence type="ECO:0000255" key="1">
    <source>
        <dbReference type="HAMAP-Rule" id="MF_02001"/>
    </source>
</evidence>
<evidence type="ECO:0000255" key="2">
    <source>
        <dbReference type="PROSITE-ProRule" id="PRU00285"/>
    </source>
</evidence>
<accession>Q8ZL03</accession>
<keyword id="KW-0143">Chaperone</keyword>
<keyword id="KW-0963">Cytoplasm</keyword>
<keyword id="KW-1185">Reference proteome</keyword>
<keyword id="KW-0346">Stress response</keyword>
<gene>
    <name evidence="1" type="primary">ibpB</name>
    <name type="ordered locus">STM3808</name>
</gene>
<name>IBPB_SALTY</name>
<sequence>MRNYDLSPLLRQWIGFDKLANALQNSGESQSFPPYNIEKSDDNHYRITLALAGFRQEDLDIQLEGTRLTVKGTPEQPENEPKWLHQGLVMQPFSLSFTLAENMEVSGATFTNGLLHIDLTRNEPETIAPQRIAINERSALNS</sequence>
<comment type="function">
    <text evidence="1">Associates with aggregated proteins, together with IbpA, to stabilize and protect them from irreversible denaturation and extensive proteolysis during heat shock and oxidative stress. Aggregated proteins bound to the IbpAB complex are more efficiently refolded and reactivated by the ATP-dependent chaperone systems ClpB and DnaK/DnaJ/GrpE. Its activity is ATP-independent.</text>
</comment>
<comment type="subunit">
    <text evidence="1">Homodimer. Forms homomultimers of about 100-150 subunits at optimal growth temperatures. Conformation changes to oligomers at high temperatures or high ionic concentrations. The decrease in size of the multimers is accompanied by an increase in chaperone activity.</text>
</comment>
<comment type="subcellular location">
    <subcellularLocation>
        <location evidence="1">Cytoplasm</location>
    </subcellularLocation>
</comment>
<comment type="domain">
    <text evidence="1">The N- and C-terminal flexible termini are involved in oligomerization and in the binding of non-native substrate proteins, and are essential for chaperone activity.</text>
</comment>
<comment type="similarity">
    <text evidence="1 2">Belongs to the small heat shock protein (HSP20) family.</text>
</comment>
<organism>
    <name type="scientific">Salmonella typhimurium (strain LT2 / SGSC1412 / ATCC 700720)</name>
    <dbReference type="NCBI Taxonomy" id="99287"/>
    <lineage>
        <taxon>Bacteria</taxon>
        <taxon>Pseudomonadati</taxon>
        <taxon>Pseudomonadota</taxon>
        <taxon>Gammaproteobacteria</taxon>
        <taxon>Enterobacterales</taxon>
        <taxon>Enterobacteriaceae</taxon>
        <taxon>Salmonella</taxon>
    </lineage>
</organism>
<dbReference type="EMBL" id="AE006468">
    <property type="protein sequence ID" value="AAL22667.1"/>
    <property type="molecule type" value="Genomic_DNA"/>
</dbReference>
<dbReference type="RefSeq" id="NP_462708.3">
    <property type="nucleotide sequence ID" value="NC_003197.2"/>
</dbReference>
<dbReference type="RefSeq" id="WP_001246919.1">
    <property type="nucleotide sequence ID" value="NC_003197.2"/>
</dbReference>
<dbReference type="SMR" id="Q8ZL03"/>
<dbReference type="STRING" id="99287.STM3808"/>
<dbReference type="PaxDb" id="99287-STM3808"/>
<dbReference type="GeneID" id="1255335"/>
<dbReference type="KEGG" id="stm:STM3808"/>
<dbReference type="PATRIC" id="fig|99287.12.peg.4031"/>
<dbReference type="HOGENOM" id="CLU_046737_4_2_6"/>
<dbReference type="OMA" id="NIERCDR"/>
<dbReference type="PhylomeDB" id="Q8ZL03"/>
<dbReference type="BioCyc" id="SENT99287:STM3808-MONOMER"/>
<dbReference type="Proteomes" id="UP000001014">
    <property type="component" value="Chromosome"/>
</dbReference>
<dbReference type="GO" id="GO:0005737">
    <property type="term" value="C:cytoplasm"/>
    <property type="evidence" value="ECO:0000318"/>
    <property type="project" value="GO_Central"/>
</dbReference>
<dbReference type="GO" id="GO:0050821">
    <property type="term" value="P:protein stabilization"/>
    <property type="evidence" value="ECO:0007669"/>
    <property type="project" value="UniProtKB-UniRule"/>
</dbReference>
<dbReference type="CDD" id="cd06470">
    <property type="entry name" value="ACD_IbpA-B_like"/>
    <property type="match status" value="1"/>
</dbReference>
<dbReference type="Gene3D" id="2.60.40.790">
    <property type="match status" value="1"/>
</dbReference>
<dbReference type="HAMAP" id="MF_02001">
    <property type="entry name" value="HSP20_IbpB"/>
    <property type="match status" value="1"/>
</dbReference>
<dbReference type="InterPro" id="IPR002068">
    <property type="entry name" value="A-crystallin/Hsp20_dom"/>
</dbReference>
<dbReference type="InterPro" id="IPR037913">
    <property type="entry name" value="ACD_IbpA/B"/>
</dbReference>
<dbReference type="InterPro" id="IPR008978">
    <property type="entry name" value="HSP20-like_chaperone"/>
</dbReference>
<dbReference type="InterPro" id="IPR022848">
    <property type="entry name" value="HSP20_IbpB"/>
</dbReference>
<dbReference type="NCBIfam" id="NF008618">
    <property type="entry name" value="PRK11597.1"/>
    <property type="match status" value="1"/>
</dbReference>
<dbReference type="PANTHER" id="PTHR47062">
    <property type="match status" value="1"/>
</dbReference>
<dbReference type="PANTHER" id="PTHR47062:SF2">
    <property type="entry name" value="SMALL HEAT SHOCK PROTEIN IBPB"/>
    <property type="match status" value="1"/>
</dbReference>
<dbReference type="Pfam" id="PF00011">
    <property type="entry name" value="HSP20"/>
    <property type="match status" value="1"/>
</dbReference>
<dbReference type="SUPFAM" id="SSF49764">
    <property type="entry name" value="HSP20-like chaperones"/>
    <property type="match status" value="1"/>
</dbReference>
<dbReference type="PROSITE" id="PS01031">
    <property type="entry name" value="SHSP"/>
    <property type="match status" value="1"/>
</dbReference>
<reference key="1">
    <citation type="journal article" date="2001" name="Nature">
        <title>Complete genome sequence of Salmonella enterica serovar Typhimurium LT2.</title>
        <authorList>
            <person name="McClelland M."/>
            <person name="Sanderson K.E."/>
            <person name="Spieth J."/>
            <person name="Clifton S.W."/>
            <person name="Latreille P."/>
            <person name="Courtney L."/>
            <person name="Porwollik S."/>
            <person name="Ali J."/>
            <person name="Dante M."/>
            <person name="Du F."/>
            <person name="Hou S."/>
            <person name="Layman D."/>
            <person name="Leonard S."/>
            <person name="Nguyen C."/>
            <person name="Scott K."/>
            <person name="Holmes A."/>
            <person name="Grewal N."/>
            <person name="Mulvaney E."/>
            <person name="Ryan E."/>
            <person name="Sun H."/>
            <person name="Florea L."/>
            <person name="Miller W."/>
            <person name="Stoneking T."/>
            <person name="Nhan M."/>
            <person name="Waterston R."/>
            <person name="Wilson R.K."/>
        </authorList>
    </citation>
    <scope>NUCLEOTIDE SEQUENCE [LARGE SCALE GENOMIC DNA]</scope>
    <source>
        <strain>LT2 / SGSC1412 / ATCC 700720</strain>
    </source>
</reference>
<protein>
    <recommendedName>
        <fullName evidence="1">Small heat shock protein IbpB</fullName>
    </recommendedName>
    <alternativeName>
        <fullName evidence="1">16 kDa heat shock protein B</fullName>
    </alternativeName>
</protein>
<proteinExistence type="inferred from homology"/>